<proteinExistence type="evidence at protein level"/>
<dbReference type="EC" id="1.-.-.-"/>
<dbReference type="EMBL" id="KZ293696">
    <property type="protein sequence ID" value="PBK84740.1"/>
    <property type="molecule type" value="Genomic_DNA"/>
</dbReference>
<dbReference type="SMR" id="A0A2H3CSA7"/>
<dbReference type="STRING" id="47427.A0A2H3CSA7"/>
<dbReference type="InParanoid" id="A0A2H3CSA7"/>
<dbReference type="OMA" id="ANVWHIN"/>
<dbReference type="OrthoDB" id="2789670at2759"/>
<dbReference type="Proteomes" id="UP000217790">
    <property type="component" value="Unassembled WGS sequence"/>
</dbReference>
<dbReference type="GO" id="GO:0016020">
    <property type="term" value="C:membrane"/>
    <property type="evidence" value="ECO:0007669"/>
    <property type="project" value="UniProtKB-SubCell"/>
</dbReference>
<dbReference type="GO" id="GO:0020037">
    <property type="term" value="F:heme binding"/>
    <property type="evidence" value="ECO:0007669"/>
    <property type="project" value="InterPro"/>
</dbReference>
<dbReference type="GO" id="GO:0005506">
    <property type="term" value="F:iron ion binding"/>
    <property type="evidence" value="ECO:0007669"/>
    <property type="project" value="InterPro"/>
</dbReference>
<dbReference type="GO" id="GO:0004497">
    <property type="term" value="F:monooxygenase activity"/>
    <property type="evidence" value="ECO:0007669"/>
    <property type="project" value="UniProtKB-KW"/>
</dbReference>
<dbReference type="GO" id="GO:0016705">
    <property type="term" value="F:oxidoreductase activity, acting on paired donors, with incorporation or reduction of molecular oxygen"/>
    <property type="evidence" value="ECO:0007669"/>
    <property type="project" value="InterPro"/>
</dbReference>
<dbReference type="CDD" id="cd11065">
    <property type="entry name" value="CYP64-like"/>
    <property type="match status" value="1"/>
</dbReference>
<dbReference type="Gene3D" id="1.10.630.10">
    <property type="entry name" value="Cytochrome P450"/>
    <property type="match status" value="1"/>
</dbReference>
<dbReference type="InterPro" id="IPR001128">
    <property type="entry name" value="Cyt_P450"/>
</dbReference>
<dbReference type="InterPro" id="IPR017972">
    <property type="entry name" value="Cyt_P450_CS"/>
</dbReference>
<dbReference type="InterPro" id="IPR002401">
    <property type="entry name" value="Cyt_P450_E_grp-I"/>
</dbReference>
<dbReference type="InterPro" id="IPR036396">
    <property type="entry name" value="Cyt_P450_sf"/>
</dbReference>
<dbReference type="InterPro" id="IPR050364">
    <property type="entry name" value="Cytochrome_P450_fung"/>
</dbReference>
<dbReference type="PANTHER" id="PTHR46300:SF2">
    <property type="entry name" value="CYTOCHROME P450 MONOOXYGENASE ALNH-RELATED"/>
    <property type="match status" value="1"/>
</dbReference>
<dbReference type="PANTHER" id="PTHR46300">
    <property type="entry name" value="P450, PUTATIVE (EUROFUNG)-RELATED-RELATED"/>
    <property type="match status" value="1"/>
</dbReference>
<dbReference type="Pfam" id="PF00067">
    <property type="entry name" value="p450"/>
    <property type="match status" value="1"/>
</dbReference>
<dbReference type="PRINTS" id="PR00463">
    <property type="entry name" value="EP450I"/>
</dbReference>
<dbReference type="PRINTS" id="PR00385">
    <property type="entry name" value="P450"/>
</dbReference>
<dbReference type="SUPFAM" id="SSF48264">
    <property type="entry name" value="Cytochrome P450"/>
    <property type="match status" value="1"/>
</dbReference>
<dbReference type="PROSITE" id="PS00086">
    <property type="entry name" value="CYTOCHROME_P450"/>
    <property type="match status" value="1"/>
</dbReference>
<accession>A0A2H3CSA7</accession>
<gene>
    <name type="ORF">ARMGADRAFT_1018418</name>
</gene>
<keyword id="KW-0325">Glycoprotein</keyword>
<keyword id="KW-0349">Heme</keyword>
<keyword id="KW-0408">Iron</keyword>
<keyword id="KW-0472">Membrane</keyword>
<keyword id="KW-0479">Metal-binding</keyword>
<keyword id="KW-0503">Monooxygenase</keyword>
<keyword id="KW-0560">Oxidoreductase</keyword>
<keyword id="KW-1185">Reference proteome</keyword>
<keyword id="KW-0812">Transmembrane</keyword>
<keyword id="KW-1133">Transmembrane helix</keyword>
<name>ARMP2_ARMGA</name>
<reference key="1">
    <citation type="journal article" date="2017" name="Nat. Ecol. Evol.">
        <title>Genome expansion and lineage-specific genetic innovations in the forest pathogenic fungi Armillaria.</title>
        <authorList>
            <person name="Sipos G."/>
            <person name="Prasanna A.N."/>
            <person name="Walter M.C."/>
            <person name="O'Connor E."/>
            <person name="Balint B."/>
            <person name="Krizsan K."/>
            <person name="Kiss B."/>
            <person name="Hess J."/>
            <person name="Varga T."/>
            <person name="Slot J."/>
            <person name="Riley R."/>
            <person name="Boka B."/>
            <person name="Rigling D."/>
            <person name="Barry K."/>
            <person name="Lee J."/>
            <person name="Mihaltcheva S."/>
            <person name="LaButti K."/>
            <person name="Lipzen A."/>
            <person name="Waldron R."/>
            <person name="Moloney N.M."/>
            <person name="Sperisen C."/>
            <person name="Kredics L."/>
            <person name="Vagvoelgyi C."/>
            <person name="Patrignani A."/>
            <person name="Fitzpatrick D."/>
            <person name="Nagy I."/>
            <person name="Doyle S."/>
            <person name="Anderson J.B."/>
            <person name="Grigoriev I.V."/>
            <person name="Gueldener U."/>
            <person name="Muensterkoetter M."/>
            <person name="Nagy L.G."/>
        </authorList>
    </citation>
    <scope>NUCLEOTIDE SEQUENCE [LARGE SCALE GENOMIC DNA]</scope>
    <source>
        <strain>Ar21-2</strain>
    </source>
</reference>
<reference key="2">
    <citation type="journal article" date="2011" name="Bioorg. Med. Chem. Lett.">
        <title>In vitro cytotoxicity of melleolide antibiotics: structural and mechanistic aspects.</title>
        <authorList>
            <person name="Bohnert M."/>
            <person name="Miethbauer S."/>
            <person name="Dahse H.M."/>
            <person name="Ziemen J."/>
            <person name="Nett M."/>
            <person name="Hoffmeister D."/>
        </authorList>
    </citation>
    <scope>BIOTECHNOLOGY</scope>
</reference>
<reference key="3">
    <citation type="journal article" date="2011" name="J. Biol. Chem.">
        <title>Cloning and characterization of an Armillaria gallica cDNA encoding protoilludene synthase, which catalyzes the first committed step in the synthesis of antimicrobial melleolides.</title>
        <authorList>
            <person name="Engels B."/>
            <person name="Heinig U."/>
            <person name="Grothe T."/>
            <person name="Stadler M."/>
            <person name="Jennewein S."/>
        </authorList>
    </citation>
    <scope>FUNCTION</scope>
    <source>
        <strain>FU02472</strain>
    </source>
</reference>
<reference key="4">
    <citation type="journal article" date="2013" name="Evid. Based Complement Alternat. Med.">
        <title>Therapeutic and radiosensitizing effects of armillaridin on human esophageal cancer cells.</title>
        <authorList>
            <person name="Chi C.W."/>
            <person name="Chen C.C."/>
            <person name="Chen Y.J."/>
        </authorList>
    </citation>
    <scope>BIOTECHNOLOGY</scope>
</reference>
<reference key="5">
    <citation type="journal article" date="2015" name="Int. J. Med. Mushrooms">
        <title>Armillaridin, a honey medicinal mushroom, Armillaria mellea (higher basidiomycetes) component, inhibits differentiation and activation of human macrophages.</title>
        <authorList>
            <person name="Liu T.P."/>
            <person name="Chen C.C."/>
            <person name="Shiao P.Y."/>
            <person name="Shieh H.R."/>
            <person name="Chen Y.Y."/>
            <person name="Chen Y.J."/>
        </authorList>
    </citation>
    <scope>BIOTECHNOLOGY</scope>
</reference>
<reference key="6">
    <citation type="journal article" date="2016" name="J. Ethnopharmacol.">
        <title>Structure, cytotoxic activity and mechanism of protoilludane sesquiterpene aryl esters from the mycelium of Armillaria mellea.</title>
        <authorList>
            <person name="Li Z."/>
            <person name="Wang Y."/>
            <person name="Jiang B."/>
            <person name="Li W."/>
            <person name="Zheng L."/>
            <person name="Yang X."/>
            <person name="Bao Y."/>
            <person name="Sun L."/>
            <person name="Huang Y."/>
            <person name="Li Y."/>
        </authorList>
    </citation>
    <scope>BIOTECHNOLOGY</scope>
</reference>
<reference key="7">
    <citation type="journal article" date="2016" name="Tumor Biol.">
        <title>Armillaridin induces autophagy-associated cell death in human chronic myelogenous leukemia K562 cells.</title>
        <authorList>
            <person name="Chang W.H."/>
            <person name="Huang H.L."/>
            <person name="Huang W.P."/>
            <person name="Chen C.C."/>
            <person name="Chen Y.J."/>
        </authorList>
    </citation>
    <scope>BIOTECHNOLOGY</scope>
</reference>
<reference key="8">
    <citation type="journal article" date="2018" name="Curr. Biol.">
        <title>Armillaria.</title>
        <authorList>
            <person name="Sipos G."/>
            <person name="Anderson J.B."/>
            <person name="Nagy L.G."/>
        </authorList>
    </citation>
    <scope>MISCELLANEOUS</scope>
</reference>
<reference key="9">
    <citation type="journal article" date="2018" name="Proc. R. Soc. B">
        <title>Clonal evolution and genome stability in a 2500-year-old fungal individual.</title>
        <authorList>
            <person name="Anderson J.B."/>
            <person name="Bruhn J.N."/>
            <person name="Kasimer D."/>
            <person name="Wang H."/>
            <person name="Rodrigue N."/>
            <person name="Smith M.L."/>
        </authorList>
    </citation>
    <scope>MISCELLANEOUS</scope>
</reference>
<reference key="10">
    <citation type="journal article" date="2019" name="Am. J. Chin. Med.">
        <title>Induction of autophagic death of human hepatocellular carcinoma cells by armillaridin from Armillaria mellea.</title>
        <authorList>
            <person name="Leu Y.S."/>
            <person name="Chen Y.J."/>
            <person name="Chen C.C."/>
            <person name="Huang H.L."/>
        </authorList>
    </citation>
    <scope>BIOTECHNOLOGY</scope>
</reference>
<reference key="11">
    <citation type="journal article" date="2020" name="Plant Dis.">
        <title>Susceptibility of garden trees and shrubs to Armillaria root rot.</title>
        <authorList>
            <person name="Cromey M.G."/>
            <person name="Drakulic J."/>
            <person name="Beal E.J."/>
            <person name="Waghorn I.A.G."/>
            <person name="Perry J.N."/>
            <person name="Clover G.R.G."/>
        </authorList>
    </citation>
    <scope>MISCELLANEOUS</scope>
</reference>
<comment type="function">
    <text evidence="1 5 14">Cytochrome P450 monooxygenase, part of the gene cluster that mediates the biosynthesis of melleolides, a range of antifungal and phytotoxic polyketide derivatives composed of an orsellinic acid (OA) moiety esterified to various sesquiterpene alcohols (Probable). The first step in melleolides biosynthesis is performed by the delta(6)-protoilludene synthase PRO1 which catalyzes the cyclization of farnesyl diphosphate to protoilludene (PubMed:21148562). The orsellinic acid synthase armB produces OA by condensing acetyl-CoA with 3 malonyl-CoA units in a three-round chain elongation reaction folowed by a C2-C7 ring closure (By similarity). ArmB further catalyzes the trans-esterification of OA to the various sesquiterpene alcohols resulting from the hydroxylation of protoilludene (By similarity). The melleolides cluster also includes 5 cytochrome P450 monooxygenases, 4 NAD(+)-dependent oxidoreductases, one flavin-dependent oxidoreductase, and one O-methyltransferase (By similarity). The cytochrome P450 monooxygenases may be involved in protoilludene hydroxylation to elaborate melleolides with multiple alcohol groups, such as melleolide D, which carries alcohol functionalities at C-4, C-5, C-10, and C-13 (By similarity). The role of the NAD(+)-dependent enzymes remains unknown (By similarity). Numerous melleolides, including arnamial, show 5'-O-methylation of the aromatic moiety which may be catalyzed by the methyltransferase encoded in the cluster (By similarity). The flavin-dependent oxidoreductase might represent the dehydrogenase yielding the aldehyde in position 1 of arnamial and other melleolides (By similarity). Finally, several halogenase localized outside of the cluster, are able to catalyze the transfer of a single chlorine atom to the melleolide backbone, resulting in a 6'-chloromelleolide product (By similarity).</text>
</comment>
<comment type="cofactor">
    <cofactor evidence="2">
        <name>heme</name>
        <dbReference type="ChEBI" id="CHEBI:30413"/>
    </cofactor>
</comment>
<comment type="pathway">
    <text evidence="14">Secondary metabolite biosynthesis.</text>
</comment>
<comment type="subcellular location">
    <subcellularLocation>
        <location evidence="3">Membrane</location>
        <topology evidence="3">Single-pass membrane protein</topology>
    </subcellularLocation>
</comment>
<comment type="biotechnology">
    <text evidence="6 7 8 9 10 12">Melleolide sesquiterpene aryl esters are cytotoxic secondary products with anti-cancer potential (PubMed:21376582, PubMed:26952552). Armillaridin shows therapeutic and radiosensitizing effects on human esophageal cancer cells (PubMed:23864890). Armillaridin induces autophagy-associated cell death in human chronic myelogenous leukemia as well as of hepatocellular carcinoma cells (PubMed:27592257, PubMed:31488037). Armillaridin can also inhibit the differentiation and activation of human macrophages and thus might have potential to be developed as a biological response modifier for inflammatory diseases (PubMed:25746621).</text>
</comment>
<comment type="miscellaneous">
    <text evidence="11 13 15">Armillaria species are both devastating forest pathogens and some of the largest and oldest terrestrial organisms on Earth (Probable) (PubMed:31746694). They forage for hosts and achieve immense colony sizes via rhizomorphs, root-like multicellular structures of clonal dispersal (Probable). One genetic Armillaria gallica individual localized in Michigan's Upper Peninsula stands out as exceptionally large, covering hundreds of tree root systems over approximately 75 hectares of the forest floor (PubMed:30963893). Based on observed growth rates of the fungus, the minimum age of this large individual can be estimated as 2500 years (PubMed:30963893).</text>
</comment>
<comment type="similarity">
    <text evidence="14">Belongs to the cytochrome P450 family.</text>
</comment>
<evidence type="ECO:0000250" key="1">
    <source>
        <dbReference type="UniProtKB" id="I3ZNU9"/>
    </source>
</evidence>
<evidence type="ECO:0000250" key="2">
    <source>
        <dbReference type="UniProtKB" id="P04798"/>
    </source>
</evidence>
<evidence type="ECO:0000255" key="3"/>
<evidence type="ECO:0000255" key="4">
    <source>
        <dbReference type="PROSITE-ProRule" id="PRU00498"/>
    </source>
</evidence>
<evidence type="ECO:0000269" key="5">
    <source>
    </source>
</evidence>
<evidence type="ECO:0000269" key="6">
    <source>
    </source>
</evidence>
<evidence type="ECO:0000269" key="7">
    <source>
    </source>
</evidence>
<evidence type="ECO:0000269" key="8">
    <source>
    </source>
</evidence>
<evidence type="ECO:0000269" key="9">
    <source>
    </source>
</evidence>
<evidence type="ECO:0000269" key="10">
    <source>
    </source>
</evidence>
<evidence type="ECO:0000269" key="11">
    <source>
    </source>
</evidence>
<evidence type="ECO:0000269" key="12">
    <source>
    </source>
</evidence>
<evidence type="ECO:0000269" key="13">
    <source>
    </source>
</evidence>
<evidence type="ECO:0000305" key="14"/>
<evidence type="ECO:0000305" key="15">
    <source>
    </source>
</evidence>
<organism>
    <name type="scientific">Armillaria gallica</name>
    <name type="common">Bulbous honey fungus</name>
    <name type="synonym">Armillaria bulbosa</name>
    <dbReference type="NCBI Taxonomy" id="47427"/>
    <lineage>
        <taxon>Eukaryota</taxon>
        <taxon>Fungi</taxon>
        <taxon>Dikarya</taxon>
        <taxon>Basidiomycota</taxon>
        <taxon>Agaricomycotina</taxon>
        <taxon>Agaricomycetes</taxon>
        <taxon>Agaricomycetidae</taxon>
        <taxon>Agaricales</taxon>
        <taxon>Marasmiineae</taxon>
        <taxon>Physalacriaceae</taxon>
        <taxon>Armillaria</taxon>
    </lineage>
</organism>
<sequence length="513" mass="57631">MTHASSAWFLAAVVIVTFIVVRHIRSSWRKLPPGPRGFPIVGNLLQLRNKQWLTFTELGKKYGDLMYFNVAGQPLIVINSLKVATDLLDRAKFSDRPRNIVASDIMTGGMFVAFAPYGNAWRHMRKAAHEGLNKNIVNQYHPIQIKEAVLLANDLLAEPNRWVSHVRRTAASTIMSIIYDKPPTSEQDPSIKRINDFATRLTRAAMPGAHFVESFPWMLRIPSKYAKWKRDAEGWYAKDSSMFESLFHSVKDRVAEGSNHPSFAATLIQGAGRHGLTDHENSWLAGAMYTAGAESSSAAMSWWMLAMILYPDAQKRAQAELDKVVGRDRLPAFSDYEHLPYVRAMVKETLRWRAVDPVGLPHRSTEDDIYNGYFIPAGSILIANVWHINRDPENYGLDAEHFDPARHLDGTGQLAQVAGTKEENHVSFGFGRRICVGRHIANDTLFAVIAMLLWAIDIEPAKDEKGASLPLDVDGCIEDGVVVRPLPFKVKVTPRFPEAQAIVEQERELLGHY</sequence>
<protein>
    <recommendedName>
        <fullName>Cytochrome P450 monooxygenase ARMGADRAFT_1018418</fullName>
        <ecNumber>1.-.-.-</ecNumber>
    </recommendedName>
    <alternativeName>
        <fullName>Melleolide biosynthesis cluster protein ARMGADRAFT_1018418</fullName>
    </alternativeName>
</protein>
<feature type="chain" id="PRO_0000449409" description="Cytochrome P450 monooxygenase ARMGADRAFT_1018418">
    <location>
        <begin position="1"/>
        <end position="513"/>
    </location>
</feature>
<feature type="transmembrane region" description="Helical" evidence="3">
    <location>
        <begin position="1"/>
        <end position="21"/>
    </location>
</feature>
<feature type="binding site" description="axial binding residue" evidence="2">
    <location>
        <position position="435"/>
    </location>
    <ligand>
        <name>heme</name>
        <dbReference type="ChEBI" id="CHEBI:30413"/>
    </ligand>
    <ligandPart>
        <name>Fe</name>
        <dbReference type="ChEBI" id="CHEBI:18248"/>
    </ligandPart>
</feature>
<feature type="glycosylation site" description="N-linked (GlcNAc...) asparagine" evidence="4">
    <location>
        <position position="442"/>
    </location>
</feature>